<reference key="1">
    <citation type="submission" date="2006-05" db="EMBL/GenBank/DDBJ databases">
        <title>Complete sequence of chromosome 1 of Burkholderia cenocepacia AU 1054.</title>
        <authorList>
            <consortium name="US DOE Joint Genome Institute"/>
            <person name="Copeland A."/>
            <person name="Lucas S."/>
            <person name="Lapidus A."/>
            <person name="Barry K."/>
            <person name="Detter J.C."/>
            <person name="Glavina del Rio T."/>
            <person name="Hammon N."/>
            <person name="Israni S."/>
            <person name="Dalin E."/>
            <person name="Tice H."/>
            <person name="Pitluck S."/>
            <person name="Chain P."/>
            <person name="Malfatti S."/>
            <person name="Shin M."/>
            <person name="Vergez L."/>
            <person name="Schmutz J."/>
            <person name="Larimer F."/>
            <person name="Land M."/>
            <person name="Hauser L."/>
            <person name="Kyrpides N."/>
            <person name="Lykidis A."/>
            <person name="LiPuma J.J."/>
            <person name="Konstantinidis K."/>
            <person name="Tiedje J.M."/>
            <person name="Richardson P."/>
        </authorList>
    </citation>
    <scope>NUCLEOTIDE SEQUENCE [LARGE SCALE GENOMIC DNA]</scope>
    <source>
        <strain>AU 1054</strain>
    </source>
</reference>
<accession>Q1BRX4</accession>
<keyword id="KW-0240">DNA-directed RNA polymerase</keyword>
<keyword id="KW-0548">Nucleotidyltransferase</keyword>
<keyword id="KW-0804">Transcription</keyword>
<keyword id="KW-0808">Transferase</keyword>
<dbReference type="EC" id="2.7.7.6" evidence="1"/>
<dbReference type="EMBL" id="CP000378">
    <property type="protein sequence ID" value="ABF77631.1"/>
    <property type="molecule type" value="Genomic_DNA"/>
</dbReference>
<dbReference type="SMR" id="Q1BRX4"/>
<dbReference type="HOGENOM" id="CLU_053084_0_0_4"/>
<dbReference type="GO" id="GO:0005737">
    <property type="term" value="C:cytoplasm"/>
    <property type="evidence" value="ECO:0007669"/>
    <property type="project" value="UniProtKB-ARBA"/>
</dbReference>
<dbReference type="GO" id="GO:0000428">
    <property type="term" value="C:DNA-directed RNA polymerase complex"/>
    <property type="evidence" value="ECO:0007669"/>
    <property type="project" value="UniProtKB-KW"/>
</dbReference>
<dbReference type="GO" id="GO:0003677">
    <property type="term" value="F:DNA binding"/>
    <property type="evidence" value="ECO:0007669"/>
    <property type="project" value="UniProtKB-UniRule"/>
</dbReference>
<dbReference type="GO" id="GO:0003899">
    <property type="term" value="F:DNA-directed RNA polymerase activity"/>
    <property type="evidence" value="ECO:0007669"/>
    <property type="project" value="UniProtKB-UniRule"/>
</dbReference>
<dbReference type="GO" id="GO:0046983">
    <property type="term" value="F:protein dimerization activity"/>
    <property type="evidence" value="ECO:0007669"/>
    <property type="project" value="InterPro"/>
</dbReference>
<dbReference type="GO" id="GO:0006351">
    <property type="term" value="P:DNA-templated transcription"/>
    <property type="evidence" value="ECO:0007669"/>
    <property type="project" value="UniProtKB-UniRule"/>
</dbReference>
<dbReference type="CDD" id="cd06928">
    <property type="entry name" value="RNAP_alpha_NTD"/>
    <property type="match status" value="1"/>
</dbReference>
<dbReference type="FunFam" id="1.10.150.20:FF:000001">
    <property type="entry name" value="DNA-directed RNA polymerase subunit alpha"/>
    <property type="match status" value="1"/>
</dbReference>
<dbReference type="FunFam" id="2.170.120.12:FF:000001">
    <property type="entry name" value="DNA-directed RNA polymerase subunit alpha"/>
    <property type="match status" value="1"/>
</dbReference>
<dbReference type="Gene3D" id="1.10.150.20">
    <property type="entry name" value="5' to 3' exonuclease, C-terminal subdomain"/>
    <property type="match status" value="1"/>
</dbReference>
<dbReference type="Gene3D" id="2.170.120.12">
    <property type="entry name" value="DNA-directed RNA polymerase, insert domain"/>
    <property type="match status" value="1"/>
</dbReference>
<dbReference type="Gene3D" id="3.30.1360.10">
    <property type="entry name" value="RNA polymerase, RBP11-like subunit"/>
    <property type="match status" value="1"/>
</dbReference>
<dbReference type="HAMAP" id="MF_00059">
    <property type="entry name" value="RNApol_bact_RpoA"/>
    <property type="match status" value="1"/>
</dbReference>
<dbReference type="InterPro" id="IPR011262">
    <property type="entry name" value="DNA-dir_RNA_pol_insert"/>
</dbReference>
<dbReference type="InterPro" id="IPR011263">
    <property type="entry name" value="DNA-dir_RNA_pol_RpoA/D/Rpb3"/>
</dbReference>
<dbReference type="InterPro" id="IPR011773">
    <property type="entry name" value="DNA-dir_RpoA"/>
</dbReference>
<dbReference type="InterPro" id="IPR036603">
    <property type="entry name" value="RBP11-like"/>
</dbReference>
<dbReference type="InterPro" id="IPR011260">
    <property type="entry name" value="RNAP_asu_C"/>
</dbReference>
<dbReference type="InterPro" id="IPR036643">
    <property type="entry name" value="RNApol_insert_sf"/>
</dbReference>
<dbReference type="NCBIfam" id="NF003513">
    <property type="entry name" value="PRK05182.1-2"/>
    <property type="match status" value="1"/>
</dbReference>
<dbReference type="NCBIfam" id="NF003519">
    <property type="entry name" value="PRK05182.2-5"/>
    <property type="match status" value="1"/>
</dbReference>
<dbReference type="NCBIfam" id="TIGR02027">
    <property type="entry name" value="rpoA"/>
    <property type="match status" value="1"/>
</dbReference>
<dbReference type="Pfam" id="PF01000">
    <property type="entry name" value="RNA_pol_A_bac"/>
    <property type="match status" value="1"/>
</dbReference>
<dbReference type="Pfam" id="PF03118">
    <property type="entry name" value="RNA_pol_A_CTD"/>
    <property type="match status" value="1"/>
</dbReference>
<dbReference type="Pfam" id="PF01193">
    <property type="entry name" value="RNA_pol_L"/>
    <property type="match status" value="1"/>
</dbReference>
<dbReference type="SMART" id="SM00662">
    <property type="entry name" value="RPOLD"/>
    <property type="match status" value="1"/>
</dbReference>
<dbReference type="SUPFAM" id="SSF47789">
    <property type="entry name" value="C-terminal domain of RNA polymerase alpha subunit"/>
    <property type="match status" value="1"/>
</dbReference>
<dbReference type="SUPFAM" id="SSF56553">
    <property type="entry name" value="Insert subdomain of RNA polymerase alpha subunit"/>
    <property type="match status" value="1"/>
</dbReference>
<dbReference type="SUPFAM" id="SSF55257">
    <property type="entry name" value="RBP11-like subunits of RNA polymerase"/>
    <property type="match status" value="1"/>
</dbReference>
<comment type="function">
    <text evidence="1">DNA-dependent RNA polymerase catalyzes the transcription of DNA into RNA using the four ribonucleoside triphosphates as substrates.</text>
</comment>
<comment type="catalytic activity">
    <reaction evidence="1">
        <text>RNA(n) + a ribonucleoside 5'-triphosphate = RNA(n+1) + diphosphate</text>
        <dbReference type="Rhea" id="RHEA:21248"/>
        <dbReference type="Rhea" id="RHEA-COMP:14527"/>
        <dbReference type="Rhea" id="RHEA-COMP:17342"/>
        <dbReference type="ChEBI" id="CHEBI:33019"/>
        <dbReference type="ChEBI" id="CHEBI:61557"/>
        <dbReference type="ChEBI" id="CHEBI:140395"/>
        <dbReference type="EC" id="2.7.7.6"/>
    </reaction>
</comment>
<comment type="subunit">
    <text evidence="1">Homodimer. The RNAP catalytic core consists of 2 alpha, 1 beta, 1 beta' and 1 omega subunit. When a sigma factor is associated with the core the holoenzyme is formed, which can initiate transcription.</text>
</comment>
<comment type="domain">
    <text evidence="1">The N-terminal domain is essential for RNAP assembly and basal transcription, whereas the C-terminal domain is involved in interaction with transcriptional regulators and with upstream promoter elements.</text>
</comment>
<comment type="similarity">
    <text evidence="1">Belongs to the RNA polymerase alpha chain family.</text>
</comment>
<organism>
    <name type="scientific">Burkholderia orbicola (strain AU 1054)</name>
    <dbReference type="NCBI Taxonomy" id="331271"/>
    <lineage>
        <taxon>Bacteria</taxon>
        <taxon>Pseudomonadati</taxon>
        <taxon>Pseudomonadota</taxon>
        <taxon>Betaproteobacteria</taxon>
        <taxon>Burkholderiales</taxon>
        <taxon>Burkholderiaceae</taxon>
        <taxon>Burkholderia</taxon>
        <taxon>Burkholderia cepacia complex</taxon>
        <taxon>Burkholderia orbicola</taxon>
    </lineage>
</organism>
<gene>
    <name evidence="1" type="primary">rpoA</name>
    <name type="ordered locus">Bcen_2733</name>
</gene>
<feature type="chain" id="PRO_0000264487" description="DNA-directed RNA polymerase subunit alpha">
    <location>
        <begin position="1"/>
        <end position="325"/>
    </location>
</feature>
<feature type="region of interest" description="Alpha N-terminal domain (alpha-NTD)" evidence="1">
    <location>
        <begin position="1"/>
        <end position="231"/>
    </location>
</feature>
<feature type="region of interest" description="Alpha C-terminal domain (alpha-CTD)" evidence="1">
    <location>
        <begin position="246"/>
        <end position="325"/>
    </location>
</feature>
<protein>
    <recommendedName>
        <fullName evidence="1">DNA-directed RNA polymerase subunit alpha</fullName>
        <shortName evidence="1">RNAP subunit alpha</shortName>
        <ecNumber evidence="1">2.7.7.6</ecNumber>
    </recommendedName>
    <alternativeName>
        <fullName evidence="1">RNA polymerase subunit alpha</fullName>
    </alternativeName>
    <alternativeName>
        <fullName evidence="1">Transcriptase subunit alpha</fullName>
    </alternativeName>
</protein>
<name>RPOA_BURO1</name>
<sequence>MQTSLLKPKIIAVESLGENHARVVMEPFERGYGHTLGNALRRVLLSSMVGYAPTEVTIAGVVHEYSTLDGVQEDVVNLLLNLKGVVFKLHNRDEVTVTLRKEGEGVVTAGDIELAHDCEVINPNHVIAHLSKGGKLDVQIKIEKGRGYVPGNVRRYGEDTAKIIGRIVLDASFSPVRRVSYAVESARVEQRTDLDKLVMNIETSGVITPEEAIRQSARILVDQLSVFAALEGTETAAEAPSRAPQIDPILLRPVDDLELTVRSANCLKAENIYYIGDLIQRTENELLKTPNLGRKSLNEIKEVLASRGLTLGMKLENWPPAGLDK</sequence>
<proteinExistence type="inferred from homology"/>
<evidence type="ECO:0000255" key="1">
    <source>
        <dbReference type="HAMAP-Rule" id="MF_00059"/>
    </source>
</evidence>